<keyword id="KW-1015">Disulfide bond</keyword>
<keyword id="KW-0339">Growth factor</keyword>
<keyword id="KW-1185">Reference proteome</keyword>
<keyword id="KW-0964">Secreted</keyword>
<feature type="chain" id="PRO_0000159611" description="Neurotrophic factor BDNF precursor form">
    <location>
        <begin position="1" status="less than"/>
        <end position="114" status="greater than"/>
    </location>
</feature>
<feature type="disulfide bond" evidence="1">
    <location>
        <begin position="14"/>
        <end position="81"/>
    </location>
</feature>
<feature type="disulfide bond" evidence="1">
    <location>
        <begin position="59"/>
        <end position="110"/>
    </location>
</feature>
<feature type="disulfide bond" evidence="1">
    <location>
        <begin position="69"/>
        <end position="112"/>
    </location>
</feature>
<feature type="sequence conflict" description="In Ref. 2." evidence="2" ref="2">
    <original>E</original>
    <variation>D</variation>
    <location>
        <position position="73"/>
    </location>
</feature>
<feature type="sequence conflict" description="In Ref. 2." evidence="2" ref="2">
    <original>K</original>
    <variation>R</variation>
    <location>
        <position position="96"/>
    </location>
</feature>
<feature type="non-terminal residue">
    <location>
        <position position="1"/>
    </location>
</feature>
<feature type="non-terminal residue">
    <location>
        <position position="114"/>
    </location>
</feature>
<dbReference type="EMBL" id="X61477">
    <property type="protein sequence ID" value="CAA43705.1"/>
    <property type="molecule type" value="mRNA"/>
</dbReference>
<dbReference type="PIR" id="I51599">
    <property type="entry name" value="I51599"/>
</dbReference>
<dbReference type="SMR" id="P25432"/>
<dbReference type="Proteomes" id="UP000186698">
    <property type="component" value="Unplaced"/>
</dbReference>
<dbReference type="GO" id="GO:0030424">
    <property type="term" value="C:axon"/>
    <property type="evidence" value="ECO:0000318"/>
    <property type="project" value="GO_Central"/>
</dbReference>
<dbReference type="GO" id="GO:0005737">
    <property type="term" value="C:cytoplasm"/>
    <property type="evidence" value="ECO:0000250"/>
    <property type="project" value="UniProtKB"/>
</dbReference>
<dbReference type="GO" id="GO:0030425">
    <property type="term" value="C:dendrite"/>
    <property type="evidence" value="ECO:0000318"/>
    <property type="project" value="GO_Central"/>
</dbReference>
<dbReference type="GO" id="GO:0005615">
    <property type="term" value="C:extracellular space"/>
    <property type="evidence" value="ECO:0000318"/>
    <property type="project" value="GO_Central"/>
</dbReference>
<dbReference type="GO" id="GO:0048471">
    <property type="term" value="C:perinuclear region of cytoplasm"/>
    <property type="evidence" value="ECO:0000250"/>
    <property type="project" value="UniProtKB"/>
</dbReference>
<dbReference type="GO" id="GO:0008021">
    <property type="term" value="C:synaptic vesicle"/>
    <property type="evidence" value="ECO:0000318"/>
    <property type="project" value="GO_Central"/>
</dbReference>
<dbReference type="GO" id="GO:0008083">
    <property type="term" value="F:growth factor activity"/>
    <property type="evidence" value="ECO:0000318"/>
    <property type="project" value="GO_Central"/>
</dbReference>
<dbReference type="GO" id="GO:0005163">
    <property type="term" value="F:nerve growth factor receptor binding"/>
    <property type="evidence" value="ECO:0000318"/>
    <property type="project" value="GO_Central"/>
</dbReference>
<dbReference type="GO" id="GO:0007169">
    <property type="term" value="P:cell surface receptor protein tyrosine kinase signaling pathway"/>
    <property type="evidence" value="ECO:0000318"/>
    <property type="project" value="GO_Central"/>
</dbReference>
<dbReference type="GO" id="GO:0050804">
    <property type="term" value="P:modulation of chemical synaptic transmission"/>
    <property type="evidence" value="ECO:0000318"/>
    <property type="project" value="GO_Central"/>
</dbReference>
<dbReference type="GO" id="GO:0043524">
    <property type="term" value="P:negative regulation of neuron apoptotic process"/>
    <property type="evidence" value="ECO:0000318"/>
    <property type="project" value="GO_Central"/>
</dbReference>
<dbReference type="GO" id="GO:0021675">
    <property type="term" value="P:nerve development"/>
    <property type="evidence" value="ECO:0000318"/>
    <property type="project" value="GO_Central"/>
</dbReference>
<dbReference type="GO" id="GO:0038180">
    <property type="term" value="P:nerve growth factor signaling pathway"/>
    <property type="evidence" value="ECO:0000318"/>
    <property type="project" value="GO_Central"/>
</dbReference>
<dbReference type="GO" id="GO:0048812">
    <property type="term" value="P:neuron projection morphogenesis"/>
    <property type="evidence" value="ECO:0000318"/>
    <property type="project" value="GO_Central"/>
</dbReference>
<dbReference type="FunFam" id="2.10.90.10:FF:000002">
    <property type="entry name" value="Brain-derived neurotrophic factor"/>
    <property type="match status" value="1"/>
</dbReference>
<dbReference type="Gene3D" id="2.10.90.10">
    <property type="entry name" value="Cystine-knot cytokines"/>
    <property type="match status" value="1"/>
</dbReference>
<dbReference type="InterPro" id="IPR020430">
    <property type="entry name" value="Brain-der_neurotrophic_factor"/>
</dbReference>
<dbReference type="InterPro" id="IPR029034">
    <property type="entry name" value="Cystine-knot_cytokine"/>
</dbReference>
<dbReference type="InterPro" id="IPR020408">
    <property type="entry name" value="Nerve_growth_factor-like"/>
</dbReference>
<dbReference type="InterPro" id="IPR002072">
    <property type="entry name" value="Nerve_growth_factor-rel"/>
</dbReference>
<dbReference type="InterPro" id="IPR019846">
    <property type="entry name" value="Nerve_growth_factor_CS"/>
</dbReference>
<dbReference type="PANTHER" id="PTHR11589:SF3">
    <property type="entry name" value="BRAIN-DERIVED NEUROTROPHIC FACTOR"/>
    <property type="match status" value="1"/>
</dbReference>
<dbReference type="PANTHER" id="PTHR11589">
    <property type="entry name" value="NERVE GROWTH FACTOR NGF -RELATED"/>
    <property type="match status" value="1"/>
</dbReference>
<dbReference type="Pfam" id="PF00243">
    <property type="entry name" value="NGF"/>
    <property type="match status" value="1"/>
</dbReference>
<dbReference type="PRINTS" id="PR01912">
    <property type="entry name" value="BDNFACTOR"/>
</dbReference>
<dbReference type="PRINTS" id="PR00268">
    <property type="entry name" value="NGF"/>
</dbReference>
<dbReference type="SMART" id="SM00140">
    <property type="entry name" value="NGF"/>
    <property type="match status" value="1"/>
</dbReference>
<dbReference type="SUPFAM" id="SSF57501">
    <property type="entry name" value="Cystine-knot cytokines"/>
    <property type="match status" value="1"/>
</dbReference>
<dbReference type="PROSITE" id="PS00248">
    <property type="entry name" value="NGF_1"/>
    <property type="match status" value="1"/>
</dbReference>
<dbReference type="PROSITE" id="PS50270">
    <property type="entry name" value="NGF_2"/>
    <property type="match status" value="1"/>
</dbReference>
<organism>
    <name type="scientific">Xenopus laevis</name>
    <name type="common">African clawed frog</name>
    <dbReference type="NCBI Taxonomy" id="8355"/>
    <lineage>
        <taxon>Eukaryota</taxon>
        <taxon>Metazoa</taxon>
        <taxon>Chordata</taxon>
        <taxon>Craniata</taxon>
        <taxon>Vertebrata</taxon>
        <taxon>Euteleostomi</taxon>
        <taxon>Amphibia</taxon>
        <taxon>Batrachia</taxon>
        <taxon>Anura</taxon>
        <taxon>Pipoidea</taxon>
        <taxon>Pipidae</taxon>
        <taxon>Xenopodinae</taxon>
        <taxon>Xenopus</taxon>
        <taxon>Xenopus</taxon>
    </lineage>
</organism>
<gene>
    <name type="primary">bdnf</name>
</gene>
<proteinExistence type="evidence at transcript level"/>
<sequence>RHSDPARRGELSVCDSISEWVTAANKKTAVDMSGATVTVLEKVPVSKGQLKQYFYETKCNPMGYMKEGCRGIEKRYWNSQCRTTQSYVRAFTMDSKKKVGWRFIRIDTSCVCTL</sequence>
<name>BDNF_XENLA</name>
<evidence type="ECO:0000250" key="1"/>
<evidence type="ECO:0000305" key="2"/>
<comment type="function">
    <text>Promotes the survival of neuronal populations that are all located either in the central nervous system or directly connected to it.</text>
</comment>
<comment type="subcellular location">
    <subcellularLocation>
        <location>Secreted</location>
    </subcellularLocation>
</comment>
<comment type="similarity">
    <text evidence="2">Belongs to the NGF-beta family.</text>
</comment>
<reference key="1">
    <citation type="journal article" date="1991" name="FEBS Lett.">
        <title>Comparison of mammalian, chicken and Xenopus brain-derived neurotrophic factor coding sequences.</title>
        <authorList>
            <person name="Isackson P.J."/>
            <person name="Towner M.D."/>
            <person name="Huntsman M.M."/>
        </authorList>
    </citation>
    <scope>NUCLEOTIDE SEQUENCE [MRNA]</scope>
</reference>
<reference key="2">
    <citation type="journal article" date="1991" name="Neuron">
        <title>Evolutionary studies of the nerve growth factor family reveal a novel member abundantly expressed in Xenopus ovary.</title>
        <authorList>
            <person name="Hallboeoek F."/>
            <person name="Ibanez C.F."/>
            <person name="Persson H."/>
        </authorList>
    </citation>
    <scope>NUCLEOTIDE SEQUENCE [MRNA] OF 58-100</scope>
    <source>
        <tissue>Liver</tissue>
    </source>
</reference>
<accession>P25432</accession>
<protein>
    <recommendedName>
        <fullName evidence="2">Neurotrophic factor BDNF precursor form</fullName>
        <shortName>proBDNF</shortName>
    </recommendedName>
    <alternativeName>
        <fullName>Brain-derived neurotrophic factor</fullName>
    </alternativeName>
</protein>